<sequence length="329" mass="36060">MTVTIYDVAREARVSMATVSRVVNGNQNVKAETKNKVNEVIKRLNYRPNAVARGLASKKTTTVGVIIPDISNIYYSQLARGLEDIATMYKYHSIISNSDNDPEKEKEIFNNLLSKQVDGIIFLGGTITEEMKELINQSSVPVVVSGTNGKDAHIASVNIDFTEAAKEITGELIEKGAKSFALVGGEHSKKAQEDVLEGLTEVLNKNGLQLGDTLNCSGAESYKEGVKAFAKMKGNLPDAILCISDEEAIGIMHSAMDAGIKVPEELQIISFNNTRLVEMVRPQLSSVIQPLYDIGAVGMRLLTKYMNDEKIEEPNVVLPHRIEYRGTTK</sequence>
<protein>
    <recommendedName>
        <fullName>Catabolite control protein A</fullName>
    </recommendedName>
</protein>
<keyword id="KW-0010">Activator</keyword>
<keyword id="KW-0238">DNA-binding</keyword>
<keyword id="KW-0678">Repressor</keyword>
<keyword id="KW-0804">Transcription</keyword>
<keyword id="KW-0805">Transcription regulation</keyword>
<reference key="1">
    <citation type="journal article" date="2002" name="Lancet">
        <title>Genome and virulence determinants of high virulence community-acquired MRSA.</title>
        <authorList>
            <person name="Baba T."/>
            <person name="Takeuchi F."/>
            <person name="Kuroda M."/>
            <person name="Yuzawa H."/>
            <person name="Aoki K."/>
            <person name="Oguchi A."/>
            <person name="Nagai Y."/>
            <person name="Iwama N."/>
            <person name="Asano K."/>
            <person name="Naimi T."/>
            <person name="Kuroda H."/>
            <person name="Cui L."/>
            <person name="Yamamoto K."/>
            <person name="Hiramatsu K."/>
        </authorList>
    </citation>
    <scope>NUCLEOTIDE SEQUENCE [LARGE SCALE GENOMIC DNA]</scope>
    <source>
        <strain>MW2</strain>
    </source>
</reference>
<feature type="chain" id="PRO_0000107931" description="Catabolite control protein A">
    <location>
        <begin position="1"/>
        <end position="329"/>
    </location>
</feature>
<feature type="domain" description="HTH lacI-type" evidence="2">
    <location>
        <begin position="1"/>
        <end position="57"/>
    </location>
</feature>
<feature type="DNA-binding region" description="H-T-H motif" evidence="2">
    <location>
        <begin position="5"/>
        <end position="24"/>
    </location>
</feature>
<comment type="function">
    <text evidence="1">Global transcriptional regulator of carbon catabolite repression (CCR) and carbon catabolite activation (CCA), which ensures optimal energy usage under diverse conditions.</text>
</comment>
<dbReference type="EMBL" id="BA000033">
    <property type="protein sequence ID" value="BAB95544.1"/>
    <property type="molecule type" value="Genomic_DNA"/>
</dbReference>
<dbReference type="RefSeq" id="WP_000219066.1">
    <property type="nucleotide sequence ID" value="NC_003923.1"/>
</dbReference>
<dbReference type="SMR" id="Q8NW33"/>
<dbReference type="KEGG" id="sam:MW1679"/>
<dbReference type="HOGENOM" id="CLU_037628_6_0_9"/>
<dbReference type="GO" id="GO:0003700">
    <property type="term" value="F:DNA-binding transcription factor activity"/>
    <property type="evidence" value="ECO:0007669"/>
    <property type="project" value="TreeGrafter"/>
</dbReference>
<dbReference type="GO" id="GO:0000976">
    <property type="term" value="F:transcription cis-regulatory region binding"/>
    <property type="evidence" value="ECO:0007669"/>
    <property type="project" value="TreeGrafter"/>
</dbReference>
<dbReference type="CDD" id="cd01392">
    <property type="entry name" value="HTH_LacI"/>
    <property type="match status" value="1"/>
</dbReference>
<dbReference type="FunFam" id="1.10.260.40:FF:000002">
    <property type="entry name" value="HTH-type transcriptional repressor PurR"/>
    <property type="match status" value="1"/>
</dbReference>
<dbReference type="Gene3D" id="3.40.50.2300">
    <property type="match status" value="2"/>
</dbReference>
<dbReference type="Gene3D" id="1.10.260.40">
    <property type="entry name" value="lambda repressor-like DNA-binding domains"/>
    <property type="match status" value="1"/>
</dbReference>
<dbReference type="InterPro" id="IPR006377">
    <property type="entry name" value="CcpA"/>
</dbReference>
<dbReference type="InterPro" id="IPR000843">
    <property type="entry name" value="HTH_LacI"/>
</dbReference>
<dbReference type="InterPro" id="IPR046335">
    <property type="entry name" value="LacI/GalR-like_sensor"/>
</dbReference>
<dbReference type="InterPro" id="IPR010982">
    <property type="entry name" value="Lambda_DNA-bd_dom_sf"/>
</dbReference>
<dbReference type="InterPro" id="IPR028082">
    <property type="entry name" value="Peripla_BP_I"/>
</dbReference>
<dbReference type="NCBIfam" id="TIGR01481">
    <property type="entry name" value="ccpA"/>
    <property type="match status" value="1"/>
</dbReference>
<dbReference type="PANTHER" id="PTHR30146:SF150">
    <property type="entry name" value="ARABINOSE METABOLISM TRANSCRIPTIONAL REPRESSOR"/>
    <property type="match status" value="1"/>
</dbReference>
<dbReference type="PANTHER" id="PTHR30146">
    <property type="entry name" value="LACI-RELATED TRANSCRIPTIONAL REPRESSOR"/>
    <property type="match status" value="1"/>
</dbReference>
<dbReference type="Pfam" id="PF00356">
    <property type="entry name" value="LacI"/>
    <property type="match status" value="1"/>
</dbReference>
<dbReference type="Pfam" id="PF13377">
    <property type="entry name" value="Peripla_BP_3"/>
    <property type="match status" value="1"/>
</dbReference>
<dbReference type="PRINTS" id="PR00036">
    <property type="entry name" value="HTHLACI"/>
</dbReference>
<dbReference type="SMART" id="SM00354">
    <property type="entry name" value="HTH_LACI"/>
    <property type="match status" value="1"/>
</dbReference>
<dbReference type="SUPFAM" id="SSF47413">
    <property type="entry name" value="lambda repressor-like DNA-binding domains"/>
    <property type="match status" value="1"/>
</dbReference>
<dbReference type="SUPFAM" id="SSF53822">
    <property type="entry name" value="Periplasmic binding protein-like I"/>
    <property type="match status" value="1"/>
</dbReference>
<dbReference type="PROSITE" id="PS00356">
    <property type="entry name" value="HTH_LACI_1"/>
    <property type="match status" value="1"/>
</dbReference>
<dbReference type="PROSITE" id="PS50932">
    <property type="entry name" value="HTH_LACI_2"/>
    <property type="match status" value="1"/>
</dbReference>
<gene>
    <name type="primary">ccpA</name>
    <name type="ordered locus">MW1679</name>
</gene>
<proteinExistence type="inferred from homology"/>
<evidence type="ECO:0000250" key="1"/>
<evidence type="ECO:0000255" key="2">
    <source>
        <dbReference type="PROSITE-ProRule" id="PRU00111"/>
    </source>
</evidence>
<organism>
    <name type="scientific">Staphylococcus aureus (strain MW2)</name>
    <dbReference type="NCBI Taxonomy" id="196620"/>
    <lineage>
        <taxon>Bacteria</taxon>
        <taxon>Bacillati</taxon>
        <taxon>Bacillota</taxon>
        <taxon>Bacilli</taxon>
        <taxon>Bacillales</taxon>
        <taxon>Staphylococcaceae</taxon>
        <taxon>Staphylococcus</taxon>
    </lineage>
</organism>
<accession>Q8NW33</accession>
<name>CCPA_STAAW</name>